<name>LPXD_BRUMB</name>
<protein>
    <recommendedName>
        <fullName evidence="1">UDP-3-O-acylglucosamine N-acyltransferase</fullName>
        <ecNumber evidence="1">2.3.1.191</ecNumber>
    </recommendedName>
</protein>
<sequence>MADPIFFKPSRELTIGDVADFTGASLRDPKLAPRSVERLASLKDAGEGALVFVEGKKNVSSLVGLKAAGVLCTESLADSVPSGIAVLVSRHPHRDFSAVGRMLFPASVRPESWLGETGISPAAFIHPTAQIEDGATVEAGAVIGSGVTIGAGTLIAATAVIGQNCQIGRNSYIAPGVSVQCAFIGNNVSLHPGVRIGQDGFGYVPGAAGLDKVPQLGRVIIQDNVEIGANTTVDRGSLDDTVIGEGTKIDNLVQIAHNVRIGRFCLVAAHCGISGSCVIGDQTMLGGRVGLADHLIIGSRVQVAAASGVMNDIPDGERWGGIPARPIKQWFRDIANIRSIGQSRKDASSDE</sequence>
<gene>
    <name evidence="1" type="primary">lpxD</name>
    <name type="ordered locus">BMEA_A1197</name>
</gene>
<proteinExistence type="inferred from homology"/>
<reference key="1">
    <citation type="submission" date="2009-03" db="EMBL/GenBank/DDBJ databases">
        <title>Brucella melitensis ATCC 23457 whole genome shotgun sequencing project.</title>
        <authorList>
            <person name="Setubal J.C."/>
            <person name="Boyle S."/>
            <person name="Crasta O.R."/>
            <person name="Gillespie J.J."/>
            <person name="Kenyon R.W."/>
            <person name="Lu J."/>
            <person name="Mane S."/>
            <person name="Nagrani S."/>
            <person name="Shallom J.M."/>
            <person name="Shallom S."/>
            <person name="Shukla M."/>
            <person name="Snyder E.E."/>
            <person name="Sobral B.W."/>
            <person name="Wattam A.R."/>
            <person name="Will R."/>
            <person name="Williams K."/>
            <person name="Yoo H."/>
            <person name="Munk C."/>
            <person name="Tapia R."/>
            <person name="Han C."/>
            <person name="Detter J.C."/>
            <person name="Bruce D."/>
            <person name="Brettin T.S."/>
        </authorList>
    </citation>
    <scope>NUCLEOTIDE SEQUENCE [LARGE SCALE GENOMIC DNA]</scope>
    <source>
        <strain>ATCC 23457</strain>
    </source>
</reference>
<evidence type="ECO:0000255" key="1">
    <source>
        <dbReference type="HAMAP-Rule" id="MF_00523"/>
    </source>
</evidence>
<comment type="function">
    <text evidence="1">Catalyzes the N-acylation of UDP-3-O-acylglucosamine using 3-hydroxyacyl-ACP as the acyl donor. Is involved in the biosynthesis of lipid A, a phosphorylated glycolipid that anchors the lipopolysaccharide to the outer membrane of the cell.</text>
</comment>
<comment type="catalytic activity">
    <reaction evidence="1">
        <text>a UDP-3-O-[(3R)-3-hydroxyacyl]-alpha-D-glucosamine + a (3R)-hydroxyacyl-[ACP] = a UDP-2-N,3-O-bis[(3R)-3-hydroxyacyl]-alpha-D-glucosamine + holo-[ACP] + H(+)</text>
        <dbReference type="Rhea" id="RHEA:53836"/>
        <dbReference type="Rhea" id="RHEA-COMP:9685"/>
        <dbReference type="Rhea" id="RHEA-COMP:9945"/>
        <dbReference type="ChEBI" id="CHEBI:15378"/>
        <dbReference type="ChEBI" id="CHEBI:64479"/>
        <dbReference type="ChEBI" id="CHEBI:78827"/>
        <dbReference type="ChEBI" id="CHEBI:137740"/>
        <dbReference type="ChEBI" id="CHEBI:137748"/>
        <dbReference type="EC" id="2.3.1.191"/>
    </reaction>
</comment>
<comment type="pathway">
    <text evidence="1">Bacterial outer membrane biogenesis; LPS lipid A biosynthesis.</text>
</comment>
<comment type="subunit">
    <text evidence="1">Homotrimer.</text>
</comment>
<comment type="similarity">
    <text evidence="1">Belongs to the transferase hexapeptide repeat family. LpxD subfamily.</text>
</comment>
<organism>
    <name type="scientific">Brucella melitensis biotype 2 (strain ATCC 23457)</name>
    <dbReference type="NCBI Taxonomy" id="546272"/>
    <lineage>
        <taxon>Bacteria</taxon>
        <taxon>Pseudomonadati</taxon>
        <taxon>Pseudomonadota</taxon>
        <taxon>Alphaproteobacteria</taxon>
        <taxon>Hyphomicrobiales</taxon>
        <taxon>Brucellaceae</taxon>
        <taxon>Brucella/Ochrobactrum group</taxon>
        <taxon>Brucella</taxon>
    </lineage>
</organism>
<keyword id="KW-0012">Acyltransferase</keyword>
<keyword id="KW-0441">Lipid A biosynthesis</keyword>
<keyword id="KW-0444">Lipid biosynthesis</keyword>
<keyword id="KW-0443">Lipid metabolism</keyword>
<keyword id="KW-0677">Repeat</keyword>
<keyword id="KW-0808">Transferase</keyword>
<feature type="chain" id="PRO_1000190890" description="UDP-3-O-acylglucosamine N-acyltransferase">
    <location>
        <begin position="1"/>
        <end position="351"/>
    </location>
</feature>
<feature type="active site" description="Proton acceptor" evidence="1">
    <location>
        <position position="257"/>
    </location>
</feature>
<accession>C0RJC2</accession>
<dbReference type="EC" id="2.3.1.191" evidence="1"/>
<dbReference type="EMBL" id="CP001488">
    <property type="protein sequence ID" value="ACO00930.1"/>
    <property type="molecule type" value="Genomic_DNA"/>
</dbReference>
<dbReference type="RefSeq" id="WP_002964281.1">
    <property type="nucleotide sequence ID" value="NC_012441.1"/>
</dbReference>
<dbReference type="SMR" id="C0RJC2"/>
<dbReference type="GeneID" id="97533596"/>
<dbReference type="KEGG" id="bmi:BMEA_A1197"/>
<dbReference type="HOGENOM" id="CLU_049865_0_2_5"/>
<dbReference type="UniPathway" id="UPA00973"/>
<dbReference type="Proteomes" id="UP000001748">
    <property type="component" value="Chromosome I"/>
</dbReference>
<dbReference type="GO" id="GO:0016020">
    <property type="term" value="C:membrane"/>
    <property type="evidence" value="ECO:0007669"/>
    <property type="project" value="GOC"/>
</dbReference>
<dbReference type="GO" id="GO:0016410">
    <property type="term" value="F:N-acyltransferase activity"/>
    <property type="evidence" value="ECO:0007669"/>
    <property type="project" value="InterPro"/>
</dbReference>
<dbReference type="GO" id="GO:0009245">
    <property type="term" value="P:lipid A biosynthetic process"/>
    <property type="evidence" value="ECO:0007669"/>
    <property type="project" value="UniProtKB-UniRule"/>
</dbReference>
<dbReference type="CDD" id="cd03352">
    <property type="entry name" value="LbH_LpxD"/>
    <property type="match status" value="1"/>
</dbReference>
<dbReference type="Gene3D" id="2.160.10.10">
    <property type="entry name" value="Hexapeptide repeat proteins"/>
    <property type="match status" value="1"/>
</dbReference>
<dbReference type="Gene3D" id="3.40.1390.10">
    <property type="entry name" value="MurE/MurF, N-terminal domain"/>
    <property type="match status" value="1"/>
</dbReference>
<dbReference type="HAMAP" id="MF_00523">
    <property type="entry name" value="LpxD"/>
    <property type="match status" value="1"/>
</dbReference>
<dbReference type="InterPro" id="IPR001451">
    <property type="entry name" value="Hexapep"/>
</dbReference>
<dbReference type="InterPro" id="IPR018357">
    <property type="entry name" value="Hexapep_transf_CS"/>
</dbReference>
<dbReference type="InterPro" id="IPR007691">
    <property type="entry name" value="LpxD"/>
</dbReference>
<dbReference type="InterPro" id="IPR011004">
    <property type="entry name" value="Trimer_LpxA-like_sf"/>
</dbReference>
<dbReference type="InterPro" id="IPR020573">
    <property type="entry name" value="UDP_GlcNAc_AcTrfase_non-rep"/>
</dbReference>
<dbReference type="NCBIfam" id="TIGR01853">
    <property type="entry name" value="lipid_A_lpxD"/>
    <property type="match status" value="1"/>
</dbReference>
<dbReference type="NCBIfam" id="NF002060">
    <property type="entry name" value="PRK00892.1"/>
    <property type="match status" value="1"/>
</dbReference>
<dbReference type="PANTHER" id="PTHR43378">
    <property type="entry name" value="UDP-3-O-ACYLGLUCOSAMINE N-ACYLTRANSFERASE"/>
    <property type="match status" value="1"/>
</dbReference>
<dbReference type="PANTHER" id="PTHR43378:SF2">
    <property type="entry name" value="UDP-3-O-ACYLGLUCOSAMINE N-ACYLTRANSFERASE 1, MITOCHONDRIAL-RELATED"/>
    <property type="match status" value="1"/>
</dbReference>
<dbReference type="Pfam" id="PF00132">
    <property type="entry name" value="Hexapep"/>
    <property type="match status" value="2"/>
</dbReference>
<dbReference type="Pfam" id="PF04613">
    <property type="entry name" value="LpxD"/>
    <property type="match status" value="1"/>
</dbReference>
<dbReference type="SUPFAM" id="SSF51161">
    <property type="entry name" value="Trimeric LpxA-like enzymes"/>
    <property type="match status" value="1"/>
</dbReference>
<dbReference type="PROSITE" id="PS00101">
    <property type="entry name" value="HEXAPEP_TRANSFERASES"/>
    <property type="match status" value="1"/>
</dbReference>